<feature type="chain" id="PRO_0000243586" description="Glutamate-1-semialdehyde 2,1-aminomutase">
    <location>
        <begin position="1"/>
        <end position="445"/>
    </location>
</feature>
<feature type="modified residue" description="N6-(pyridoxal phosphate)lysine" evidence="1">
    <location>
        <position position="278"/>
    </location>
</feature>
<organism>
    <name type="scientific">Mycolicibacterium paratuberculosis (strain ATCC BAA-968 / K-10)</name>
    <name type="common">Mycobacterium paratuberculosis</name>
    <dbReference type="NCBI Taxonomy" id="262316"/>
    <lineage>
        <taxon>Bacteria</taxon>
        <taxon>Bacillati</taxon>
        <taxon>Actinomycetota</taxon>
        <taxon>Actinomycetes</taxon>
        <taxon>Mycobacteriales</taxon>
        <taxon>Mycobacteriaceae</taxon>
        <taxon>Mycobacterium</taxon>
        <taxon>Mycobacterium avium complex (MAC)</taxon>
    </lineage>
</organism>
<protein>
    <recommendedName>
        <fullName evidence="1">Glutamate-1-semialdehyde 2,1-aminomutase</fullName>
        <shortName evidence="1">GSA</shortName>
        <ecNumber evidence="1">5.4.3.8</ecNumber>
    </recommendedName>
    <alternativeName>
        <fullName evidence="1">Glutamate-1-semialdehyde aminotransferase</fullName>
        <shortName evidence="1">GSA-AT</shortName>
    </alternativeName>
</protein>
<proteinExistence type="inferred from homology"/>
<comment type="catalytic activity">
    <reaction evidence="1">
        <text>(S)-4-amino-5-oxopentanoate = 5-aminolevulinate</text>
        <dbReference type="Rhea" id="RHEA:14265"/>
        <dbReference type="ChEBI" id="CHEBI:57501"/>
        <dbReference type="ChEBI" id="CHEBI:356416"/>
        <dbReference type="EC" id="5.4.3.8"/>
    </reaction>
</comment>
<comment type="cofactor">
    <cofactor evidence="1">
        <name>pyridoxal 5'-phosphate</name>
        <dbReference type="ChEBI" id="CHEBI:597326"/>
    </cofactor>
</comment>
<comment type="pathway">
    <text evidence="1">Porphyrin-containing compound metabolism; protoporphyrin-IX biosynthesis; 5-aminolevulinate from L-glutamyl-tRNA(Glu): step 2/2.</text>
</comment>
<comment type="subunit">
    <text evidence="1">Homodimer.</text>
</comment>
<comment type="subcellular location">
    <subcellularLocation>
        <location evidence="1">Cytoplasm</location>
    </subcellularLocation>
</comment>
<comment type="similarity">
    <text evidence="1">Belongs to the class-III pyridoxal-phosphate-dependent aminotransferase family. HemL subfamily.</text>
</comment>
<name>GSA_MYCPA</name>
<dbReference type="EC" id="5.4.3.8" evidence="1"/>
<dbReference type="EMBL" id="AE016958">
    <property type="protein sequence ID" value="AAS06570.1"/>
    <property type="molecule type" value="Genomic_DNA"/>
</dbReference>
<dbReference type="RefSeq" id="WP_003873666.1">
    <property type="nucleotide sequence ID" value="NZ_CP106873.1"/>
</dbReference>
<dbReference type="SMR" id="Q73SQ3"/>
<dbReference type="STRING" id="262316.MAP_4020"/>
<dbReference type="KEGG" id="mpa:MAP_4020"/>
<dbReference type="eggNOG" id="COG0001">
    <property type="taxonomic scope" value="Bacteria"/>
</dbReference>
<dbReference type="HOGENOM" id="CLU_016922_1_5_11"/>
<dbReference type="UniPathway" id="UPA00251">
    <property type="reaction ID" value="UER00317"/>
</dbReference>
<dbReference type="Proteomes" id="UP000000580">
    <property type="component" value="Chromosome"/>
</dbReference>
<dbReference type="GO" id="GO:0005737">
    <property type="term" value="C:cytoplasm"/>
    <property type="evidence" value="ECO:0007669"/>
    <property type="project" value="UniProtKB-SubCell"/>
</dbReference>
<dbReference type="GO" id="GO:0042286">
    <property type="term" value="F:glutamate-1-semialdehyde 2,1-aminomutase activity"/>
    <property type="evidence" value="ECO:0007669"/>
    <property type="project" value="UniProtKB-UniRule"/>
</dbReference>
<dbReference type="GO" id="GO:0030170">
    <property type="term" value="F:pyridoxal phosphate binding"/>
    <property type="evidence" value="ECO:0007669"/>
    <property type="project" value="InterPro"/>
</dbReference>
<dbReference type="GO" id="GO:0008483">
    <property type="term" value="F:transaminase activity"/>
    <property type="evidence" value="ECO:0007669"/>
    <property type="project" value="InterPro"/>
</dbReference>
<dbReference type="GO" id="GO:0006782">
    <property type="term" value="P:protoporphyrinogen IX biosynthetic process"/>
    <property type="evidence" value="ECO:0007669"/>
    <property type="project" value="UniProtKB-UniRule"/>
</dbReference>
<dbReference type="CDD" id="cd00610">
    <property type="entry name" value="OAT_like"/>
    <property type="match status" value="1"/>
</dbReference>
<dbReference type="FunFam" id="3.40.640.10:FF:000021">
    <property type="entry name" value="Glutamate-1-semialdehyde 2,1-aminomutase"/>
    <property type="match status" value="1"/>
</dbReference>
<dbReference type="Gene3D" id="3.90.1150.10">
    <property type="entry name" value="Aspartate Aminotransferase, domain 1"/>
    <property type="match status" value="1"/>
</dbReference>
<dbReference type="Gene3D" id="3.40.640.10">
    <property type="entry name" value="Type I PLP-dependent aspartate aminotransferase-like (Major domain)"/>
    <property type="match status" value="1"/>
</dbReference>
<dbReference type="HAMAP" id="MF_00375">
    <property type="entry name" value="HemL_aminotrans_3"/>
    <property type="match status" value="1"/>
</dbReference>
<dbReference type="InterPro" id="IPR004639">
    <property type="entry name" value="4pyrrol_synth_GluAld_NH2Trfase"/>
</dbReference>
<dbReference type="InterPro" id="IPR005814">
    <property type="entry name" value="Aminotrans_3"/>
</dbReference>
<dbReference type="InterPro" id="IPR049704">
    <property type="entry name" value="Aminotrans_3_PPA_site"/>
</dbReference>
<dbReference type="InterPro" id="IPR015424">
    <property type="entry name" value="PyrdxlP-dep_Trfase"/>
</dbReference>
<dbReference type="InterPro" id="IPR015421">
    <property type="entry name" value="PyrdxlP-dep_Trfase_major"/>
</dbReference>
<dbReference type="InterPro" id="IPR015422">
    <property type="entry name" value="PyrdxlP-dep_Trfase_small"/>
</dbReference>
<dbReference type="NCBIfam" id="TIGR00713">
    <property type="entry name" value="hemL"/>
    <property type="match status" value="1"/>
</dbReference>
<dbReference type="NCBIfam" id="NF000818">
    <property type="entry name" value="PRK00062.1"/>
    <property type="match status" value="1"/>
</dbReference>
<dbReference type="PANTHER" id="PTHR43713">
    <property type="entry name" value="GLUTAMATE-1-SEMIALDEHYDE 2,1-AMINOMUTASE"/>
    <property type="match status" value="1"/>
</dbReference>
<dbReference type="PANTHER" id="PTHR43713:SF3">
    <property type="entry name" value="GLUTAMATE-1-SEMIALDEHYDE 2,1-AMINOMUTASE 1, CHLOROPLASTIC-RELATED"/>
    <property type="match status" value="1"/>
</dbReference>
<dbReference type="Pfam" id="PF00202">
    <property type="entry name" value="Aminotran_3"/>
    <property type="match status" value="1"/>
</dbReference>
<dbReference type="SUPFAM" id="SSF53383">
    <property type="entry name" value="PLP-dependent transferases"/>
    <property type="match status" value="1"/>
</dbReference>
<dbReference type="PROSITE" id="PS00600">
    <property type="entry name" value="AA_TRANSFER_CLASS_3"/>
    <property type="match status" value="1"/>
</dbReference>
<accession>Q73SQ3</accession>
<reference key="1">
    <citation type="journal article" date="2005" name="Proc. Natl. Acad. Sci. U.S.A.">
        <title>The complete genome sequence of Mycobacterium avium subspecies paratuberculosis.</title>
        <authorList>
            <person name="Li L."/>
            <person name="Bannantine J.P."/>
            <person name="Zhang Q."/>
            <person name="Amonsin A."/>
            <person name="May B.J."/>
            <person name="Alt D."/>
            <person name="Banerji N."/>
            <person name="Kanjilal S."/>
            <person name="Kapur V."/>
        </authorList>
    </citation>
    <scope>NUCLEOTIDE SEQUENCE [LARGE SCALE GENOMIC DNA]</scope>
    <source>
        <strain>ATCC BAA-968 / K-10</strain>
    </source>
</reference>
<gene>
    <name evidence="1" type="primary">hemL</name>
    <name type="ordered locus">MAP_4020</name>
</gene>
<evidence type="ECO:0000255" key="1">
    <source>
        <dbReference type="HAMAP-Rule" id="MF_00375"/>
    </source>
</evidence>
<sequence length="445" mass="45519">MGSSDQATAHARAQAASARLFDDACAVIPGGVNSPVRAFTAVGGTPPFITAARGCRLTDADGNHYVDLVCSWGPMILGHAHPAVVEAVAKAAASGLSFGAPTPAESELAAEMIARVAPVERIRLVNSGTEATMSAVRLARGFTGRAKIVKFSGCYHGHVDALLADAGSGVATLGLPSSPGVTGATAADTIVLPYNDIDAVRQAFTEFGDQIAAVITEASPGNMGVVPPAPGFNAALRALTADHGALLIVDEVMTGFRVSRSGWYGIDPVDADLFTFGKVMSGGLPAAAFGGRAEVMERLAPLGPVYQAGTLSGNPVAMAAGLATLRHADAAAYAALDANADRLARLLSDALTNAGVPHQIPRAGNMLSVFFTDTPVTDFASARATQTWRYPPFFHALLDAGVYPPCSAFETWFVSTALDDDAFDRIAAALPAAARAAAGADEGNS</sequence>
<keyword id="KW-0963">Cytoplasm</keyword>
<keyword id="KW-0413">Isomerase</keyword>
<keyword id="KW-0627">Porphyrin biosynthesis</keyword>
<keyword id="KW-0663">Pyridoxal phosphate</keyword>
<keyword id="KW-1185">Reference proteome</keyword>